<gene>
    <name evidence="1" type="primary">recR</name>
    <name type="ordered locus">P9515_11881</name>
</gene>
<keyword id="KW-0227">DNA damage</keyword>
<keyword id="KW-0233">DNA recombination</keyword>
<keyword id="KW-0234">DNA repair</keyword>
<keyword id="KW-0479">Metal-binding</keyword>
<keyword id="KW-0862">Zinc</keyword>
<keyword id="KW-0863">Zinc-finger</keyword>
<reference key="1">
    <citation type="journal article" date="2007" name="PLoS Genet.">
        <title>Patterns and implications of gene gain and loss in the evolution of Prochlorococcus.</title>
        <authorList>
            <person name="Kettler G.C."/>
            <person name="Martiny A.C."/>
            <person name="Huang K."/>
            <person name="Zucker J."/>
            <person name="Coleman M.L."/>
            <person name="Rodrigue S."/>
            <person name="Chen F."/>
            <person name="Lapidus A."/>
            <person name="Ferriera S."/>
            <person name="Johnson J."/>
            <person name="Steglich C."/>
            <person name="Church G.M."/>
            <person name="Richardson P."/>
            <person name="Chisholm S.W."/>
        </authorList>
    </citation>
    <scope>NUCLEOTIDE SEQUENCE [LARGE SCALE GENOMIC DNA]</scope>
    <source>
        <strain>MIT 9515</strain>
    </source>
</reference>
<comment type="function">
    <text evidence="1">May play a role in DNA repair. It seems to be involved in an RecBC-independent recombinational process of DNA repair. It may act with RecF and RecO.</text>
</comment>
<comment type="similarity">
    <text evidence="1">Belongs to the RecR family.</text>
</comment>
<organism>
    <name type="scientific">Prochlorococcus marinus (strain MIT 9515)</name>
    <dbReference type="NCBI Taxonomy" id="167542"/>
    <lineage>
        <taxon>Bacteria</taxon>
        <taxon>Bacillati</taxon>
        <taxon>Cyanobacteriota</taxon>
        <taxon>Cyanophyceae</taxon>
        <taxon>Synechococcales</taxon>
        <taxon>Prochlorococcaceae</taxon>
        <taxon>Prochlorococcus</taxon>
    </lineage>
</organism>
<feature type="chain" id="PRO_0000322933" description="Recombination protein RecR">
    <location>
        <begin position="1"/>
        <end position="199"/>
    </location>
</feature>
<feature type="domain" description="Toprim" evidence="1">
    <location>
        <begin position="81"/>
        <end position="175"/>
    </location>
</feature>
<feature type="zinc finger region" description="C4-type" evidence="1">
    <location>
        <begin position="58"/>
        <end position="73"/>
    </location>
</feature>
<accession>A2BX84</accession>
<protein>
    <recommendedName>
        <fullName evidence="1">Recombination protein RecR</fullName>
    </recommendedName>
</protein>
<evidence type="ECO:0000255" key="1">
    <source>
        <dbReference type="HAMAP-Rule" id="MF_00017"/>
    </source>
</evidence>
<name>RECR_PROM5</name>
<dbReference type="EMBL" id="CP000552">
    <property type="protein sequence ID" value="ABM72395.1"/>
    <property type="molecule type" value="Genomic_DNA"/>
</dbReference>
<dbReference type="RefSeq" id="WP_011820495.1">
    <property type="nucleotide sequence ID" value="NC_008817.1"/>
</dbReference>
<dbReference type="SMR" id="A2BX84"/>
<dbReference type="STRING" id="167542.P9515_11881"/>
<dbReference type="GeneID" id="60201056"/>
<dbReference type="KEGG" id="pmc:P9515_11881"/>
<dbReference type="eggNOG" id="COG0353">
    <property type="taxonomic scope" value="Bacteria"/>
</dbReference>
<dbReference type="HOGENOM" id="CLU_060739_1_0_3"/>
<dbReference type="OrthoDB" id="9802672at2"/>
<dbReference type="Proteomes" id="UP000001589">
    <property type="component" value="Chromosome"/>
</dbReference>
<dbReference type="GO" id="GO:0003677">
    <property type="term" value="F:DNA binding"/>
    <property type="evidence" value="ECO:0007669"/>
    <property type="project" value="UniProtKB-UniRule"/>
</dbReference>
<dbReference type="GO" id="GO:0008270">
    <property type="term" value="F:zinc ion binding"/>
    <property type="evidence" value="ECO:0007669"/>
    <property type="project" value="UniProtKB-KW"/>
</dbReference>
<dbReference type="GO" id="GO:0006310">
    <property type="term" value="P:DNA recombination"/>
    <property type="evidence" value="ECO:0007669"/>
    <property type="project" value="UniProtKB-UniRule"/>
</dbReference>
<dbReference type="GO" id="GO:0006281">
    <property type="term" value="P:DNA repair"/>
    <property type="evidence" value="ECO:0007669"/>
    <property type="project" value="UniProtKB-UniRule"/>
</dbReference>
<dbReference type="CDD" id="cd01025">
    <property type="entry name" value="TOPRIM_recR"/>
    <property type="match status" value="1"/>
</dbReference>
<dbReference type="Gene3D" id="3.30.60.80">
    <property type="match status" value="1"/>
</dbReference>
<dbReference type="Gene3D" id="3.40.1360.10">
    <property type="match status" value="1"/>
</dbReference>
<dbReference type="Gene3D" id="6.10.250.240">
    <property type="match status" value="1"/>
</dbReference>
<dbReference type="Gene3D" id="1.10.8.420">
    <property type="entry name" value="RecR Domain 1"/>
    <property type="match status" value="1"/>
</dbReference>
<dbReference type="HAMAP" id="MF_00017">
    <property type="entry name" value="RecR"/>
    <property type="match status" value="1"/>
</dbReference>
<dbReference type="InterPro" id="IPR000093">
    <property type="entry name" value="DNA_Rcmb_RecR"/>
</dbReference>
<dbReference type="InterPro" id="IPR023627">
    <property type="entry name" value="Rcmb_RecR"/>
</dbReference>
<dbReference type="InterPro" id="IPR015967">
    <property type="entry name" value="Rcmb_RecR_Znf"/>
</dbReference>
<dbReference type="InterPro" id="IPR006171">
    <property type="entry name" value="TOPRIM_dom"/>
</dbReference>
<dbReference type="InterPro" id="IPR034137">
    <property type="entry name" value="TOPRIM_RecR"/>
</dbReference>
<dbReference type="NCBIfam" id="TIGR00615">
    <property type="entry name" value="recR"/>
    <property type="match status" value="1"/>
</dbReference>
<dbReference type="PANTHER" id="PTHR30446">
    <property type="entry name" value="RECOMBINATION PROTEIN RECR"/>
    <property type="match status" value="1"/>
</dbReference>
<dbReference type="PANTHER" id="PTHR30446:SF0">
    <property type="entry name" value="RECOMBINATION PROTEIN RECR"/>
    <property type="match status" value="1"/>
</dbReference>
<dbReference type="Pfam" id="PF21175">
    <property type="entry name" value="RecR_C"/>
    <property type="match status" value="1"/>
</dbReference>
<dbReference type="Pfam" id="PF21176">
    <property type="entry name" value="RecR_HhH"/>
    <property type="match status" value="1"/>
</dbReference>
<dbReference type="Pfam" id="PF02132">
    <property type="entry name" value="RecR_ZnF"/>
    <property type="match status" value="1"/>
</dbReference>
<dbReference type="Pfam" id="PF13662">
    <property type="entry name" value="Toprim_4"/>
    <property type="match status" value="1"/>
</dbReference>
<dbReference type="SMART" id="SM00493">
    <property type="entry name" value="TOPRIM"/>
    <property type="match status" value="1"/>
</dbReference>
<dbReference type="SUPFAM" id="SSF111304">
    <property type="entry name" value="Recombination protein RecR"/>
    <property type="match status" value="1"/>
</dbReference>
<dbReference type="PROSITE" id="PS01300">
    <property type="entry name" value="RECR"/>
    <property type="match status" value="1"/>
</dbReference>
<dbReference type="PROSITE" id="PS50880">
    <property type="entry name" value="TOPRIM"/>
    <property type="match status" value="1"/>
</dbReference>
<sequence>MTTFTKPLSKLIGHFEKFPGIGPRTAQRLALFILKQSESSIRDFSKALLEAHSNVGHCKKCFNLTSEEECDICRNAERNQNIICVVAETKDLLALERAREFKGVYHVIGGLISPMDSIGPEILEIRSLVERVSKSEIDEIILALTPSVEGDTTSLYIGKLLTPFTKVTRIAYGLPMGSELEYVDEVTLARALEGRTNLI</sequence>
<proteinExistence type="inferred from homology"/>